<name>HCYB_CONCC</name>
<proteinExistence type="evidence at protein level"/>
<evidence type="ECO:0000250" key="1"/>
<evidence type="ECO:0000255" key="2"/>
<evidence type="ECO:0000269" key="3">
    <source>
    </source>
</evidence>
<evidence type="ECO:0000303" key="4">
    <source>
    </source>
</evidence>
<evidence type="ECO:0000305" key="5"/>
<keyword id="KW-0186">Copper</keyword>
<keyword id="KW-0903">Direct protein sequencing</keyword>
<keyword id="KW-0479">Metal-binding</keyword>
<keyword id="KW-0561">Oxygen transport</keyword>
<keyword id="KW-0964">Secreted</keyword>
<keyword id="KW-0883">Thioether bond</keyword>
<keyword id="KW-0813">Transport</keyword>
<dbReference type="SABIO-RK" id="P84620"/>
<dbReference type="GO" id="GO:0005576">
    <property type="term" value="C:extracellular region"/>
    <property type="evidence" value="ECO:0007669"/>
    <property type="project" value="UniProtKB-SubCell"/>
</dbReference>
<dbReference type="GO" id="GO:0046872">
    <property type="term" value="F:metal ion binding"/>
    <property type="evidence" value="ECO:0007669"/>
    <property type="project" value="UniProtKB-KW"/>
</dbReference>
<dbReference type="GO" id="GO:0005344">
    <property type="term" value="F:oxygen carrier activity"/>
    <property type="evidence" value="ECO:0007669"/>
    <property type="project" value="UniProtKB-KW"/>
</dbReference>
<protein>
    <recommendedName>
        <fullName>Hemocyanin subunit B</fullName>
    </recommendedName>
    <alternativeName>
        <fullName>CCH-B</fullName>
    </alternativeName>
</protein>
<reference evidence="5" key="1">
    <citation type="journal article" date="2004" name="J. Biol. Chem.">
        <title>Hemocyanin of the molluscan Concholepas concholepas exhibits an unusual heterodecameric array of subunits.</title>
        <authorList>
            <person name="De Ioannes P."/>
            <person name="Moltedo B."/>
            <person name="Oliva H."/>
            <person name="Pacheco R."/>
            <person name="Faunes F."/>
            <person name="De Ioannes A.E."/>
            <person name="Becker M.I."/>
        </authorList>
    </citation>
    <scope>PROTEIN SEQUENCE</scope>
    <scope>COFACTOR</scope>
    <scope>SUBUNIT</scope>
    <scope>SUBCELLULAR LOCATION</scope>
    <scope>TISSUE SPECIFICITY</scope>
    <source>
        <tissue evidence="3">Hemolymph</tissue>
    </source>
</reference>
<comment type="function">
    <text evidence="5">Hemocyanins are copper-containing oxygen carriers occurring freely dissolved in the hemolymph of many mollusks and arthropods.</text>
</comment>
<comment type="cofactor">
    <cofactor evidence="3">
        <name>Cu(2+)</name>
        <dbReference type="ChEBI" id="CHEBI:29036"/>
    </cofactor>
    <text evidence="3">Binds 2 copper ions per heterodimer.</text>
</comment>
<comment type="subunit">
    <text evidence="3">Heterodidecamer composed of A and B subunits, each containing 8 globular oxygen-binding functional units. Heterogenous decameric or multidecameric structures may also be formed.</text>
</comment>
<comment type="subcellular location">
    <subcellularLocation>
        <location evidence="3">Secreted</location>
        <location evidence="3">Extracellular space</location>
    </subcellularLocation>
</comment>
<comment type="tissue specificity">
    <text evidence="3">Hemolymph.</text>
</comment>
<comment type="PTM">
    <text evidence="1">Forms a thioether bond between 2 amino acids.</text>
</comment>
<comment type="similarity">
    <text evidence="2">Belongs to the tyrosinase family. Hemocyanin subfamily.</text>
</comment>
<feature type="chain" id="PRO_0000204264" description="Hemocyanin subunit B">
    <location>
        <begin position="1"/>
        <end position="7" status="greater than"/>
    </location>
</feature>
<feature type="non-terminal residue" evidence="4">
    <location>
        <position position="7"/>
    </location>
</feature>
<organism>
    <name type="scientific">Concholepas concholepas</name>
    <name type="common">Barnacle rock-shell</name>
    <name type="synonym">Buccinum concholepas</name>
    <dbReference type="NCBI Taxonomy" id="137544"/>
    <lineage>
        <taxon>Eukaryota</taxon>
        <taxon>Metazoa</taxon>
        <taxon>Spiralia</taxon>
        <taxon>Lophotrochozoa</taxon>
        <taxon>Mollusca</taxon>
        <taxon>Gastropoda</taxon>
        <taxon>Caenogastropoda</taxon>
        <taxon>Neogastropoda</taxon>
        <taxon>Muricoidea</taxon>
        <taxon>Muricidae</taxon>
        <taxon>Concholepas</taxon>
    </lineage>
</organism>
<accession>P84620</accession>
<sequence length="7" mass="855">LXRKNVD</sequence>